<feature type="chain" id="PRO_0000167068" description="Nicotinate-nucleotide--dimethylbenzimidazole phosphoribosyltransferase">
    <location>
        <begin position="1"/>
        <end position="356"/>
    </location>
</feature>
<feature type="active site" description="Proton acceptor" evidence="1">
    <location>
        <position position="317"/>
    </location>
</feature>
<gene>
    <name evidence="1" type="primary">cobT</name>
    <name type="ordered locus">STY2219</name>
    <name type="ordered locus">t0858</name>
</gene>
<comment type="function">
    <text evidence="1">Catalyzes the synthesis of alpha-ribazole-5'-phosphate from nicotinate mononucleotide (NAMN) and 5,6-dimethylbenzimidazole (DMB).</text>
</comment>
<comment type="catalytic activity">
    <reaction evidence="1">
        <text>5,6-dimethylbenzimidazole + nicotinate beta-D-ribonucleotide = alpha-ribazole 5'-phosphate + nicotinate + H(+)</text>
        <dbReference type="Rhea" id="RHEA:11196"/>
        <dbReference type="ChEBI" id="CHEBI:15378"/>
        <dbReference type="ChEBI" id="CHEBI:15890"/>
        <dbReference type="ChEBI" id="CHEBI:32544"/>
        <dbReference type="ChEBI" id="CHEBI:57502"/>
        <dbReference type="ChEBI" id="CHEBI:57918"/>
        <dbReference type="EC" id="2.4.2.21"/>
    </reaction>
</comment>
<comment type="pathway">
    <text evidence="1">Nucleoside biosynthesis; alpha-ribazole biosynthesis; alpha-ribazole from 5,6-dimethylbenzimidazole: step 1/2.</text>
</comment>
<comment type="subunit">
    <text evidence="1">Homodimer.</text>
</comment>
<comment type="similarity">
    <text evidence="1">Belongs to the CobT family.</text>
</comment>
<organism>
    <name type="scientific">Salmonella typhi</name>
    <dbReference type="NCBI Taxonomy" id="90370"/>
    <lineage>
        <taxon>Bacteria</taxon>
        <taxon>Pseudomonadati</taxon>
        <taxon>Pseudomonadota</taxon>
        <taxon>Gammaproteobacteria</taxon>
        <taxon>Enterobacterales</taxon>
        <taxon>Enterobacteriaceae</taxon>
        <taxon>Salmonella</taxon>
    </lineage>
</organism>
<evidence type="ECO:0000255" key="1">
    <source>
        <dbReference type="HAMAP-Rule" id="MF_00230"/>
    </source>
</evidence>
<dbReference type="EC" id="2.4.2.21" evidence="1"/>
<dbReference type="EMBL" id="AL513382">
    <property type="protein sequence ID" value="CAD02377.1"/>
    <property type="molecule type" value="Genomic_DNA"/>
</dbReference>
<dbReference type="EMBL" id="AE014613">
    <property type="protein sequence ID" value="AAO68542.1"/>
    <property type="molecule type" value="Genomic_DNA"/>
</dbReference>
<dbReference type="RefSeq" id="NP_456570.1">
    <property type="nucleotide sequence ID" value="NC_003198.1"/>
</dbReference>
<dbReference type="RefSeq" id="WP_001193966.1">
    <property type="nucleotide sequence ID" value="NZ_WSUR01000002.1"/>
</dbReference>
<dbReference type="SMR" id="Q8Z5N9"/>
<dbReference type="STRING" id="220341.gene:17586132"/>
<dbReference type="KEGG" id="stt:t0858"/>
<dbReference type="KEGG" id="sty:STY2219"/>
<dbReference type="PATRIC" id="fig|220341.7.peg.2238"/>
<dbReference type="eggNOG" id="COG2038">
    <property type="taxonomic scope" value="Bacteria"/>
</dbReference>
<dbReference type="HOGENOM" id="CLU_002982_0_0_6"/>
<dbReference type="OMA" id="AWMRKCA"/>
<dbReference type="OrthoDB" id="9781491at2"/>
<dbReference type="UniPathway" id="UPA00061">
    <property type="reaction ID" value="UER00516"/>
</dbReference>
<dbReference type="Proteomes" id="UP000000541">
    <property type="component" value="Chromosome"/>
</dbReference>
<dbReference type="Proteomes" id="UP000002670">
    <property type="component" value="Chromosome"/>
</dbReference>
<dbReference type="GO" id="GO:0008939">
    <property type="term" value="F:nicotinate-nucleotide-dimethylbenzimidazole phosphoribosyltransferase activity"/>
    <property type="evidence" value="ECO:0007669"/>
    <property type="project" value="UniProtKB-UniRule"/>
</dbReference>
<dbReference type="GO" id="GO:0009236">
    <property type="term" value="P:cobalamin biosynthetic process"/>
    <property type="evidence" value="ECO:0007669"/>
    <property type="project" value="UniProtKB-KW"/>
</dbReference>
<dbReference type="CDD" id="cd02439">
    <property type="entry name" value="DMB-PRT_CobT"/>
    <property type="match status" value="1"/>
</dbReference>
<dbReference type="FunFam" id="1.10.1610.10:FF:000001">
    <property type="entry name" value="Nicotinate-nucleotide--dimethylbenzimidazole phosphoribosyltransferase"/>
    <property type="match status" value="1"/>
</dbReference>
<dbReference type="FunFam" id="3.40.50.10210:FF:000001">
    <property type="entry name" value="Nicotinate-nucleotide--dimethylbenzimidazole phosphoribosyltransferase"/>
    <property type="match status" value="1"/>
</dbReference>
<dbReference type="Gene3D" id="1.10.1610.10">
    <property type="match status" value="1"/>
</dbReference>
<dbReference type="Gene3D" id="3.40.50.10210">
    <property type="match status" value="1"/>
</dbReference>
<dbReference type="HAMAP" id="MF_00230">
    <property type="entry name" value="CobT"/>
    <property type="match status" value="1"/>
</dbReference>
<dbReference type="InterPro" id="IPR003200">
    <property type="entry name" value="Nict_dMeBzImd_PRibTrfase"/>
</dbReference>
<dbReference type="InterPro" id="IPR017846">
    <property type="entry name" value="Nict_dMeBzImd_PRibTrfase_bact"/>
</dbReference>
<dbReference type="InterPro" id="IPR023195">
    <property type="entry name" value="Nict_dMeBzImd_PRibTrfase_N"/>
</dbReference>
<dbReference type="InterPro" id="IPR036087">
    <property type="entry name" value="Nict_dMeBzImd_PRibTrfase_sf"/>
</dbReference>
<dbReference type="NCBIfam" id="TIGR03160">
    <property type="entry name" value="cobT_DBIPRT"/>
    <property type="match status" value="1"/>
</dbReference>
<dbReference type="NCBIfam" id="NF000996">
    <property type="entry name" value="PRK00105.1"/>
    <property type="match status" value="1"/>
</dbReference>
<dbReference type="PANTHER" id="PTHR43463">
    <property type="entry name" value="NICOTINATE-NUCLEOTIDE--DIMETHYLBENZIMIDAZOLE PHOSPHORIBOSYLTRANSFERASE"/>
    <property type="match status" value="1"/>
</dbReference>
<dbReference type="PANTHER" id="PTHR43463:SF1">
    <property type="entry name" value="NICOTINATE-NUCLEOTIDE--DIMETHYLBENZIMIDAZOLE PHOSPHORIBOSYLTRANSFERASE"/>
    <property type="match status" value="1"/>
</dbReference>
<dbReference type="Pfam" id="PF02277">
    <property type="entry name" value="DBI_PRT"/>
    <property type="match status" value="1"/>
</dbReference>
<dbReference type="SUPFAM" id="SSF52733">
    <property type="entry name" value="Nicotinate mononucleotide:5,6-dimethylbenzimidazole phosphoribosyltransferase (CobT)"/>
    <property type="match status" value="1"/>
</dbReference>
<protein>
    <recommendedName>
        <fullName evidence="1">Nicotinate-nucleotide--dimethylbenzimidazole phosphoribosyltransferase</fullName>
        <shortName evidence="1">NN:DBI PRT</shortName>
        <ecNumber evidence="1">2.4.2.21</ecNumber>
    </recommendedName>
    <alternativeName>
        <fullName evidence="1">N(1)-alpha-phosphoribosyltransferase</fullName>
    </alternativeName>
</protein>
<proteinExistence type="inferred from homology"/>
<reference key="1">
    <citation type="journal article" date="2001" name="Nature">
        <title>Complete genome sequence of a multiple drug resistant Salmonella enterica serovar Typhi CT18.</title>
        <authorList>
            <person name="Parkhill J."/>
            <person name="Dougan G."/>
            <person name="James K.D."/>
            <person name="Thomson N.R."/>
            <person name="Pickard D."/>
            <person name="Wain J."/>
            <person name="Churcher C.M."/>
            <person name="Mungall K.L."/>
            <person name="Bentley S.D."/>
            <person name="Holden M.T.G."/>
            <person name="Sebaihia M."/>
            <person name="Baker S."/>
            <person name="Basham D."/>
            <person name="Brooks K."/>
            <person name="Chillingworth T."/>
            <person name="Connerton P."/>
            <person name="Cronin A."/>
            <person name="Davis P."/>
            <person name="Davies R.M."/>
            <person name="Dowd L."/>
            <person name="White N."/>
            <person name="Farrar J."/>
            <person name="Feltwell T."/>
            <person name="Hamlin N."/>
            <person name="Haque A."/>
            <person name="Hien T.T."/>
            <person name="Holroyd S."/>
            <person name="Jagels K."/>
            <person name="Krogh A."/>
            <person name="Larsen T.S."/>
            <person name="Leather S."/>
            <person name="Moule S."/>
            <person name="O'Gaora P."/>
            <person name="Parry C."/>
            <person name="Quail M.A."/>
            <person name="Rutherford K.M."/>
            <person name="Simmonds M."/>
            <person name="Skelton J."/>
            <person name="Stevens K."/>
            <person name="Whitehead S."/>
            <person name="Barrell B.G."/>
        </authorList>
    </citation>
    <scope>NUCLEOTIDE SEQUENCE [LARGE SCALE GENOMIC DNA]</scope>
    <source>
        <strain>CT18</strain>
    </source>
</reference>
<reference key="2">
    <citation type="journal article" date="2003" name="J. Bacteriol.">
        <title>Comparative genomics of Salmonella enterica serovar Typhi strains Ty2 and CT18.</title>
        <authorList>
            <person name="Deng W."/>
            <person name="Liou S.-R."/>
            <person name="Plunkett G. III"/>
            <person name="Mayhew G.F."/>
            <person name="Rose D.J."/>
            <person name="Burland V."/>
            <person name="Kodoyianni V."/>
            <person name="Schwartz D.C."/>
            <person name="Blattner F.R."/>
        </authorList>
    </citation>
    <scope>NUCLEOTIDE SEQUENCE [LARGE SCALE GENOMIC DNA]</scope>
    <source>
        <strain>ATCC 700931 / Ty2</strain>
    </source>
</reference>
<keyword id="KW-0169">Cobalamin biosynthesis</keyword>
<keyword id="KW-0328">Glycosyltransferase</keyword>
<keyword id="KW-0808">Transferase</keyword>
<accession>Q8Z5N9</accession>
<sequence length="356" mass="36594">MQTLHALFRDIPAPDAEAMARAQQHIDGLLKPPGSLGRLETLAVQLAGMPGLNGTPQVGEKAVLVMCADHGVWDEGVAVSPKIVTAIQAANMTQGTTGVCVLAAQAGAKVHVIDVGIDAEPIPGVVDMRVARGCGNIAVGPAMSRSQAEALLLEVSRYTCDLAKRGVTLFGVGELGMANTTPAAAMVSVFTGSDAKEVVGIGANLPPSRIDNKVDVVRRAIAINQPNPRDGIDVLSKVGGFDLVGMTGVMLGAARCGLPVLLDGFLSYSAALAACQIAPAVRPYLIPSHFSAEKGARIALAHLSMEPYLHMAMRLGEGSGAALAMPIVEAACAMFHNMGELAASNIVLPEGNANAT</sequence>
<name>COBT_SALTI</name>